<feature type="chain" id="PRO_0000380991" description="8-amino-7-oxononanoate synthase">
    <location>
        <begin position="1"/>
        <end position="390"/>
    </location>
</feature>
<feature type="binding site" evidence="1">
    <location>
        <position position="20"/>
    </location>
    <ligand>
        <name>substrate</name>
    </ligand>
</feature>
<feature type="binding site" evidence="1">
    <location>
        <begin position="107"/>
        <end position="108"/>
    </location>
    <ligand>
        <name>pyridoxal 5'-phosphate</name>
        <dbReference type="ChEBI" id="CHEBI:597326"/>
    </ligand>
</feature>
<feature type="binding site" evidence="1">
    <location>
        <position position="132"/>
    </location>
    <ligand>
        <name>substrate</name>
    </ligand>
</feature>
<feature type="binding site" evidence="1">
    <location>
        <position position="179"/>
    </location>
    <ligand>
        <name>pyridoxal 5'-phosphate</name>
        <dbReference type="ChEBI" id="CHEBI:597326"/>
    </ligand>
</feature>
<feature type="binding site" evidence="1">
    <location>
        <begin position="204"/>
        <end position="207"/>
    </location>
    <ligand>
        <name>pyridoxal 5'-phosphate</name>
        <dbReference type="ChEBI" id="CHEBI:597326"/>
    </ligand>
</feature>
<feature type="binding site" evidence="1">
    <location>
        <begin position="235"/>
        <end position="238"/>
    </location>
    <ligand>
        <name>pyridoxal 5'-phosphate</name>
        <dbReference type="ChEBI" id="CHEBI:597326"/>
    </ligand>
</feature>
<feature type="binding site" evidence="1">
    <location>
        <position position="352"/>
    </location>
    <ligand>
        <name>substrate</name>
    </ligand>
</feature>
<feature type="modified residue" description="N6-(pyridoxal phosphate)lysine" evidence="1">
    <location>
        <position position="238"/>
    </location>
</feature>
<gene>
    <name type="ordered locus">Exig_1033</name>
</gene>
<name>BIOF_EXIS2</name>
<evidence type="ECO:0000250" key="1"/>
<evidence type="ECO:0000305" key="2"/>
<reference key="1">
    <citation type="submission" date="2008-04" db="EMBL/GenBank/DDBJ databases">
        <title>Complete sequence of chromosome of Exiguobacterium sibiricum 255-15.</title>
        <authorList>
            <consortium name="US DOE Joint Genome Institute"/>
            <person name="Copeland A."/>
            <person name="Lucas S."/>
            <person name="Lapidus A."/>
            <person name="Glavina del Rio T."/>
            <person name="Dalin E."/>
            <person name="Tice H."/>
            <person name="Bruce D."/>
            <person name="Goodwin L."/>
            <person name="Pitluck S."/>
            <person name="Kiss H."/>
            <person name="Chertkov O."/>
            <person name="Monk C."/>
            <person name="Brettin T."/>
            <person name="Detter J.C."/>
            <person name="Han C."/>
            <person name="Kuske C.R."/>
            <person name="Schmutz J."/>
            <person name="Larimer F."/>
            <person name="Land M."/>
            <person name="Hauser L."/>
            <person name="Kyrpides N."/>
            <person name="Mikhailova N."/>
            <person name="Vishnivetskaya T."/>
            <person name="Rodrigues D.F."/>
            <person name="Gilichinsky D."/>
            <person name="Tiedje J."/>
            <person name="Richardson P."/>
        </authorList>
    </citation>
    <scope>NUCLEOTIDE SEQUENCE [LARGE SCALE GENOMIC DNA]</scope>
    <source>
        <strain>DSM 17290 / CCUG 55495 / CIP 109462 / JCM 13490 / 255-15</strain>
    </source>
</reference>
<organism>
    <name type="scientific">Exiguobacterium sibiricum (strain DSM 17290 / CCUG 55495 / CIP 109462 / JCM 13490 / 255-15)</name>
    <dbReference type="NCBI Taxonomy" id="262543"/>
    <lineage>
        <taxon>Bacteria</taxon>
        <taxon>Bacillati</taxon>
        <taxon>Bacillota</taxon>
        <taxon>Bacilli</taxon>
        <taxon>Bacillales</taxon>
        <taxon>Bacillales Family XII. Incertae Sedis</taxon>
        <taxon>Exiguobacterium</taxon>
    </lineage>
</organism>
<proteinExistence type="inferred from homology"/>
<protein>
    <recommendedName>
        <fullName>8-amino-7-oxononanoate synthase</fullName>
        <shortName>AONS</shortName>
        <ecNumber>2.3.1.47</ecNumber>
    </recommendedName>
    <alternativeName>
        <fullName>7-keto-8-amino-pelargonic acid synthase</fullName>
        <shortName>7-KAP synthase</shortName>
        <shortName>KAPA synthase</shortName>
    </alternativeName>
    <alternativeName>
        <fullName>8-amino-7-ketopelargonate synthase</fullName>
    </alternativeName>
    <alternativeName>
        <fullName>Alpha-oxoamine synthase</fullName>
    </alternativeName>
</protein>
<accession>B1YMC6</accession>
<keyword id="KW-0012">Acyltransferase</keyword>
<keyword id="KW-0093">Biotin biosynthesis</keyword>
<keyword id="KW-0663">Pyridoxal phosphate</keyword>
<keyword id="KW-1185">Reference proteome</keyword>
<keyword id="KW-0808">Transferase</keyword>
<comment type="function">
    <text evidence="1">Catalyzes the decarboxylative condensation of pimeloyl-[acyl-carrier protein] and L-alanine to produce 8-amino-7-oxononanoate (AON), [acyl-carrier protein], and carbon dioxide.</text>
</comment>
<comment type="catalytic activity">
    <reaction>
        <text>6-carboxyhexanoyl-[ACP] + L-alanine + H(+) = (8S)-8-amino-7-oxononanoate + holo-[ACP] + CO2</text>
        <dbReference type="Rhea" id="RHEA:42288"/>
        <dbReference type="Rhea" id="RHEA-COMP:9685"/>
        <dbReference type="Rhea" id="RHEA-COMP:9955"/>
        <dbReference type="ChEBI" id="CHEBI:15378"/>
        <dbReference type="ChEBI" id="CHEBI:16526"/>
        <dbReference type="ChEBI" id="CHEBI:57972"/>
        <dbReference type="ChEBI" id="CHEBI:64479"/>
        <dbReference type="ChEBI" id="CHEBI:78846"/>
        <dbReference type="ChEBI" id="CHEBI:149468"/>
        <dbReference type="EC" id="2.3.1.47"/>
    </reaction>
</comment>
<comment type="cofactor">
    <cofactor evidence="1">
        <name>pyridoxal 5'-phosphate</name>
        <dbReference type="ChEBI" id="CHEBI:597326"/>
    </cofactor>
</comment>
<comment type="pathway">
    <text>Cofactor biosynthesis; biotin biosynthesis.</text>
</comment>
<comment type="subunit">
    <text evidence="1">Homodimer.</text>
</comment>
<comment type="similarity">
    <text evidence="2">Belongs to the class-II pyridoxal-phosphate-dependent aminotransferase family. BioF subfamily.</text>
</comment>
<sequence length="390" mass="42602">MGFEHLRTELEEMKQAGTFRELVALESAQHNRVTVDGKELIQLSSNNYLGLAAHPRLAKRAADAALEFGAGTGSVRTIAGTLEMHQAFERELATFKHTEAALVFQSGFATNLGVLSALLGPEDVVISDALNHASIIDGIRLTKAKRRIYNHVDLADLEAALQETQDARTRLVVTDGVFSMDGNIAPLPEIVELAEKYDALVMVDDAHASGVLGKSGRGTVNHFGLDGRVALQVGTLSKAIGVLGGYVACEQHVKDYLIHKGRPFLFSTSHPPAVVEANREALRVMEEETELFDRLWENTEFFKHGLRELGFNIGTSTTPITPVIVGDEALCHQLSDRLRQHGVFAQGIAFPTVAKGKARVRTIVTAEHTREDLEQALEAFKQVGQELELI</sequence>
<dbReference type="EC" id="2.3.1.47"/>
<dbReference type="EMBL" id="CP001022">
    <property type="protein sequence ID" value="ACB60513.1"/>
    <property type="molecule type" value="Genomic_DNA"/>
</dbReference>
<dbReference type="RefSeq" id="WP_012369936.1">
    <property type="nucleotide sequence ID" value="NC_010556.1"/>
</dbReference>
<dbReference type="SMR" id="B1YMC6"/>
<dbReference type="STRING" id="262543.Exig_1033"/>
<dbReference type="KEGG" id="esi:Exig_1033"/>
<dbReference type="eggNOG" id="COG0156">
    <property type="taxonomic scope" value="Bacteria"/>
</dbReference>
<dbReference type="HOGENOM" id="CLU_015846_11_0_9"/>
<dbReference type="OrthoDB" id="9807157at2"/>
<dbReference type="UniPathway" id="UPA00078"/>
<dbReference type="Proteomes" id="UP000001681">
    <property type="component" value="Chromosome"/>
</dbReference>
<dbReference type="GO" id="GO:0008710">
    <property type="term" value="F:8-amino-7-oxononanoate synthase activity"/>
    <property type="evidence" value="ECO:0000250"/>
    <property type="project" value="UniProtKB"/>
</dbReference>
<dbReference type="GO" id="GO:0008890">
    <property type="term" value="F:glycine C-acetyltransferase activity"/>
    <property type="evidence" value="ECO:0000250"/>
    <property type="project" value="UniProtKB"/>
</dbReference>
<dbReference type="GO" id="GO:0030170">
    <property type="term" value="F:pyridoxal phosphate binding"/>
    <property type="evidence" value="ECO:0000250"/>
    <property type="project" value="UniProtKB"/>
</dbReference>
<dbReference type="GO" id="GO:0009102">
    <property type="term" value="P:biotin biosynthetic process"/>
    <property type="evidence" value="ECO:0000250"/>
    <property type="project" value="UniProtKB"/>
</dbReference>
<dbReference type="CDD" id="cd06454">
    <property type="entry name" value="KBL_like"/>
    <property type="match status" value="1"/>
</dbReference>
<dbReference type="FunFam" id="3.40.640.10:FF:000006">
    <property type="entry name" value="5-aminolevulinate synthase, mitochondrial"/>
    <property type="match status" value="1"/>
</dbReference>
<dbReference type="Gene3D" id="3.90.1150.10">
    <property type="entry name" value="Aspartate Aminotransferase, domain 1"/>
    <property type="match status" value="1"/>
</dbReference>
<dbReference type="Gene3D" id="3.40.640.10">
    <property type="entry name" value="Type I PLP-dependent aspartate aminotransferase-like (Major domain)"/>
    <property type="match status" value="1"/>
</dbReference>
<dbReference type="InterPro" id="IPR001917">
    <property type="entry name" value="Aminotrans_II_pyridoxalP_BS"/>
</dbReference>
<dbReference type="InterPro" id="IPR004839">
    <property type="entry name" value="Aminotransferase_I/II_large"/>
</dbReference>
<dbReference type="InterPro" id="IPR050087">
    <property type="entry name" value="AON_synthase_class-II"/>
</dbReference>
<dbReference type="InterPro" id="IPR010962">
    <property type="entry name" value="AONS_Archaea/Firmicutes"/>
</dbReference>
<dbReference type="InterPro" id="IPR004723">
    <property type="entry name" value="AONS_Archaea/Proteobacteria"/>
</dbReference>
<dbReference type="InterPro" id="IPR015424">
    <property type="entry name" value="PyrdxlP-dep_Trfase"/>
</dbReference>
<dbReference type="InterPro" id="IPR015421">
    <property type="entry name" value="PyrdxlP-dep_Trfase_major"/>
</dbReference>
<dbReference type="InterPro" id="IPR015422">
    <property type="entry name" value="PyrdxlP-dep_Trfase_small"/>
</dbReference>
<dbReference type="NCBIfam" id="TIGR00858">
    <property type="entry name" value="bioF"/>
    <property type="match status" value="1"/>
</dbReference>
<dbReference type="NCBIfam" id="TIGR01825">
    <property type="entry name" value="gly_Cac_T_rel"/>
    <property type="match status" value="1"/>
</dbReference>
<dbReference type="NCBIfam" id="NF005394">
    <property type="entry name" value="PRK06939.1"/>
    <property type="match status" value="1"/>
</dbReference>
<dbReference type="PANTHER" id="PTHR13693">
    <property type="entry name" value="CLASS II AMINOTRANSFERASE/8-AMINO-7-OXONONANOATE SYNTHASE"/>
    <property type="match status" value="1"/>
</dbReference>
<dbReference type="PANTHER" id="PTHR13693:SF3">
    <property type="entry name" value="LD36009P"/>
    <property type="match status" value="1"/>
</dbReference>
<dbReference type="Pfam" id="PF00155">
    <property type="entry name" value="Aminotran_1_2"/>
    <property type="match status" value="1"/>
</dbReference>
<dbReference type="SUPFAM" id="SSF53383">
    <property type="entry name" value="PLP-dependent transferases"/>
    <property type="match status" value="1"/>
</dbReference>
<dbReference type="PROSITE" id="PS00599">
    <property type="entry name" value="AA_TRANSFER_CLASS_2"/>
    <property type="match status" value="1"/>
</dbReference>